<protein>
    <recommendedName>
        <fullName evidence="1">Uncharacterized methyltransferase Aflv_0758</fullName>
        <ecNumber evidence="1">2.1.1.-</ecNumber>
    </recommendedName>
</protein>
<name>Y758_ANOFW</name>
<organism>
    <name type="scientific">Anoxybacillus flavithermus (strain DSM 21510 / WK1)</name>
    <dbReference type="NCBI Taxonomy" id="491915"/>
    <lineage>
        <taxon>Bacteria</taxon>
        <taxon>Bacillati</taxon>
        <taxon>Bacillota</taxon>
        <taxon>Bacilli</taxon>
        <taxon>Bacillales</taxon>
        <taxon>Anoxybacillaceae</taxon>
        <taxon>Anoxybacillus</taxon>
    </lineage>
</organism>
<proteinExistence type="inferred from homology"/>
<evidence type="ECO:0000255" key="1">
    <source>
        <dbReference type="HAMAP-Rule" id="MF_02100"/>
    </source>
</evidence>
<evidence type="ECO:0000305" key="2"/>
<comment type="function">
    <text evidence="1">Could be a S-adenosyl-L-methionine-dependent methyltransferase.</text>
</comment>
<comment type="similarity">
    <text evidence="1">Belongs to the methyltransferase superfamily. YrrT family.</text>
</comment>
<comment type="sequence caution" evidence="2">
    <conflict type="erroneous initiation">
        <sequence resource="EMBL-CDS" id="ACJ33137"/>
    </conflict>
</comment>
<accession>B7GIU6</accession>
<feature type="chain" id="PRO_0000373839" description="Uncharacterized methyltransferase Aflv_0758">
    <location>
        <begin position="1"/>
        <end position="212"/>
    </location>
</feature>
<feature type="binding site" evidence="1">
    <location>
        <position position="53"/>
    </location>
    <ligand>
        <name>S-adenosyl-L-methionine</name>
        <dbReference type="ChEBI" id="CHEBI:59789"/>
    </ligand>
</feature>
<feature type="binding site" evidence="1">
    <location>
        <position position="74"/>
    </location>
    <ligand>
        <name>S-adenosyl-L-methionine</name>
        <dbReference type="ChEBI" id="CHEBI:59789"/>
    </ligand>
</feature>
<feature type="binding site" evidence="1">
    <location>
        <position position="96"/>
    </location>
    <ligand>
        <name>S-adenosyl-L-methionine</name>
        <dbReference type="ChEBI" id="CHEBI:59789"/>
    </ligand>
</feature>
<gene>
    <name type="ordered locus">Aflv_0758</name>
</gene>
<keyword id="KW-0489">Methyltransferase</keyword>
<keyword id="KW-0949">S-adenosyl-L-methionine</keyword>
<keyword id="KW-0808">Transferase</keyword>
<dbReference type="EC" id="2.1.1.-" evidence="1"/>
<dbReference type="EMBL" id="CP000922">
    <property type="protein sequence ID" value="ACJ33137.1"/>
    <property type="status" value="ALT_INIT"/>
    <property type="molecule type" value="Genomic_DNA"/>
</dbReference>
<dbReference type="RefSeq" id="WP_041638061.1">
    <property type="nucleotide sequence ID" value="NC_011567.1"/>
</dbReference>
<dbReference type="SMR" id="B7GIU6"/>
<dbReference type="STRING" id="491915.Aflv_0758"/>
<dbReference type="GeneID" id="7037015"/>
<dbReference type="KEGG" id="afl:Aflv_0758"/>
<dbReference type="PATRIC" id="fig|491915.6.peg.774"/>
<dbReference type="eggNOG" id="COG2226">
    <property type="taxonomic scope" value="Bacteria"/>
</dbReference>
<dbReference type="HOGENOM" id="CLU_111961_0_0_9"/>
<dbReference type="Proteomes" id="UP000000742">
    <property type="component" value="Chromosome"/>
</dbReference>
<dbReference type="GO" id="GO:0008757">
    <property type="term" value="F:S-adenosylmethionine-dependent methyltransferase activity"/>
    <property type="evidence" value="ECO:0007669"/>
    <property type="project" value="UniProtKB-UniRule"/>
</dbReference>
<dbReference type="GO" id="GO:0032259">
    <property type="term" value="P:methylation"/>
    <property type="evidence" value="ECO:0007669"/>
    <property type="project" value="UniProtKB-KW"/>
</dbReference>
<dbReference type="CDD" id="cd02440">
    <property type="entry name" value="AdoMet_MTases"/>
    <property type="match status" value="1"/>
</dbReference>
<dbReference type="Gene3D" id="3.40.50.150">
    <property type="entry name" value="Vaccinia Virus protein VP39"/>
    <property type="match status" value="1"/>
</dbReference>
<dbReference type="HAMAP" id="MF_02100">
    <property type="entry name" value="Methyltr_YrrT"/>
    <property type="match status" value="1"/>
</dbReference>
<dbReference type="InterPro" id="IPR041698">
    <property type="entry name" value="Methyltransf_25"/>
</dbReference>
<dbReference type="InterPro" id="IPR029063">
    <property type="entry name" value="SAM-dependent_MTases_sf"/>
</dbReference>
<dbReference type="InterPro" id="IPR023553">
    <property type="entry name" value="Uncharacterised_MeTfrase_YrrT"/>
</dbReference>
<dbReference type="PANTHER" id="PTHR43861">
    <property type="entry name" value="TRANS-ACONITATE 2-METHYLTRANSFERASE-RELATED"/>
    <property type="match status" value="1"/>
</dbReference>
<dbReference type="Pfam" id="PF13649">
    <property type="entry name" value="Methyltransf_25"/>
    <property type="match status" value="1"/>
</dbReference>
<dbReference type="SUPFAM" id="SSF53335">
    <property type="entry name" value="S-adenosyl-L-methionine-dependent methyltransferases"/>
    <property type="match status" value="1"/>
</dbReference>
<sequence>MGREFLDIFENWAQSYDSSVYGHDEQYRDVFDGYETILNTVVEKSGNVVLEFGVGTGNLTKKLIEANKTVYGIEPSAPMRELAKEKLGHVTIEDGDFLQFPLPNEPFDTIVSTYAFHHLTDQEKEEAIGKYSTLLRKGGKIVFADTAFINREAYEAMIAEAKQKGFVDLAEDLQREYYTTIPALEHMFTTHGFTVTFTPMNRFVWLMEAVKQ</sequence>
<reference key="1">
    <citation type="journal article" date="2008" name="Genome Biol.">
        <title>Encapsulated in silica: genome, proteome and physiology of the thermophilic bacterium Anoxybacillus flavithermus WK1.</title>
        <authorList>
            <person name="Saw J.H."/>
            <person name="Mountain B.W."/>
            <person name="Feng L."/>
            <person name="Omelchenko M.V."/>
            <person name="Hou S."/>
            <person name="Saito J.A."/>
            <person name="Stott M.B."/>
            <person name="Li D."/>
            <person name="Zhao G."/>
            <person name="Wu J."/>
            <person name="Galperin M.Y."/>
            <person name="Koonin E.V."/>
            <person name="Makarova K.S."/>
            <person name="Wolf Y.I."/>
            <person name="Rigden D.J."/>
            <person name="Dunfield P.F."/>
            <person name="Wang L."/>
            <person name="Alam M."/>
        </authorList>
    </citation>
    <scope>NUCLEOTIDE SEQUENCE [LARGE SCALE GENOMIC DNA]</scope>
    <source>
        <strain>DSM 21510 / WK1</strain>
    </source>
</reference>